<sequence>MSATLQSFLPAPKYSALPHSRDDDENDEYDNTEAGPSTSSSSSALVSTSSPSIPPYGQRAAWRPRTQADYANGGAYPECHVAQYPLDMGRNRSAATSNKLAMRIDGEGNKRYDAIVKQSLRPGQTVQTEFKDLVPLSQRTDIKEKDRNSGFERPSHEEVMSNTERTRLALEAITKGKNKPVVPKAGNLPGQQQAAQFIRYTPAQQGAGNGTQRIIKMTEAQRDPLEPPRHRFKKTAAGPPSPPPPVLRSPPRKVTAQEQKDWMIPPAVSNWKNNKGYTIPLDKRLAADASGIQDVVINDNFAQFAEALHLADRHAREEVRQRSIMQQKLAAKEKAAKEEHLRNLAQRAREERAGVSSATPSVLGRDDDVASRLADSDARPTRATPRAEGGMSAMLAGYRSDSDSDESAASDEEDDEGARERDRIREERRRERQRELRMSNMGIEQRTKQLLREQNRDISEKVALGLAKPTASKESMTDSRLFNQGESLAAGYGDEDSYNLYDKPLFSGSSAAAAIYRRPAARGGANDIYSGADDTALEEELGKNDRFGLGQSKFRGVQGDADRDSGSGSAPVRSGPVQFEKDTSDPFAINQFLEDAKRGIKRTSDQDADDARKKLRDEHDS</sequence>
<reference key="1">
    <citation type="journal article" date="2006" name="Nature">
        <title>Insights from the genome of the biotrophic fungal plant pathogen Ustilago maydis.</title>
        <authorList>
            <person name="Kaemper J."/>
            <person name="Kahmann R."/>
            <person name="Boelker M."/>
            <person name="Ma L.-J."/>
            <person name="Brefort T."/>
            <person name="Saville B.J."/>
            <person name="Banuett F."/>
            <person name="Kronstad J.W."/>
            <person name="Gold S.E."/>
            <person name="Mueller O."/>
            <person name="Perlin M.H."/>
            <person name="Woesten H.A.B."/>
            <person name="de Vries R."/>
            <person name="Ruiz-Herrera J."/>
            <person name="Reynaga-Pena C.G."/>
            <person name="Snetselaar K."/>
            <person name="McCann M."/>
            <person name="Perez-Martin J."/>
            <person name="Feldbruegge M."/>
            <person name="Basse C.W."/>
            <person name="Steinberg G."/>
            <person name="Ibeas J.I."/>
            <person name="Holloman W."/>
            <person name="Guzman P."/>
            <person name="Farman M.L."/>
            <person name="Stajich J.E."/>
            <person name="Sentandreu R."/>
            <person name="Gonzalez-Prieto J.M."/>
            <person name="Kennell J.C."/>
            <person name="Molina L."/>
            <person name="Schirawski J."/>
            <person name="Mendoza-Mendoza A."/>
            <person name="Greilinger D."/>
            <person name="Muench K."/>
            <person name="Roessel N."/>
            <person name="Scherer M."/>
            <person name="Vranes M."/>
            <person name="Ladendorf O."/>
            <person name="Vincon V."/>
            <person name="Fuchs U."/>
            <person name="Sandrock B."/>
            <person name="Meng S."/>
            <person name="Ho E.C.H."/>
            <person name="Cahill M.J."/>
            <person name="Boyce K.J."/>
            <person name="Klose J."/>
            <person name="Klosterman S.J."/>
            <person name="Deelstra H.J."/>
            <person name="Ortiz-Castellanos L."/>
            <person name="Li W."/>
            <person name="Sanchez-Alonso P."/>
            <person name="Schreier P.H."/>
            <person name="Haeuser-Hahn I."/>
            <person name="Vaupel M."/>
            <person name="Koopmann E."/>
            <person name="Friedrich G."/>
            <person name="Voss H."/>
            <person name="Schlueter T."/>
            <person name="Margolis J."/>
            <person name="Platt D."/>
            <person name="Swimmer C."/>
            <person name="Gnirke A."/>
            <person name="Chen F."/>
            <person name="Vysotskaia V."/>
            <person name="Mannhaupt G."/>
            <person name="Gueldener U."/>
            <person name="Muensterkoetter M."/>
            <person name="Haase D."/>
            <person name="Oesterheld M."/>
            <person name="Mewes H.-W."/>
            <person name="Mauceli E.W."/>
            <person name="DeCaprio D."/>
            <person name="Wade C.M."/>
            <person name="Butler J."/>
            <person name="Young S.K."/>
            <person name="Jaffe D.B."/>
            <person name="Calvo S.E."/>
            <person name="Nusbaum C."/>
            <person name="Galagan J.E."/>
            <person name="Birren B.W."/>
        </authorList>
    </citation>
    <scope>NUCLEOTIDE SEQUENCE [LARGE SCALE GENOMIC DNA]</scope>
    <source>
        <strain>DSM 14603 / FGSC 9021 / UM521</strain>
    </source>
</reference>
<reference key="2">
    <citation type="submission" date="2014-09" db="EMBL/GenBank/DDBJ databases">
        <authorList>
            <person name="Gueldener U."/>
            <person name="Muensterkoetter M."/>
            <person name="Walter M.C."/>
            <person name="Mannhaupt G."/>
            <person name="Kahmann R."/>
        </authorList>
    </citation>
    <scope>GENOME REANNOTATION</scope>
    <source>
        <strain>DSM 14603 / FGSC 9021 / UM521</strain>
    </source>
</reference>
<protein>
    <recommendedName>
        <fullName>Pre-mRNA-processing protein 45</fullName>
    </recommendedName>
</protein>
<proteinExistence type="inferred from homology"/>
<gene>
    <name type="primary">PRP45</name>
    <name type="ORF">UMAG_02618</name>
</gene>
<name>PRP45_MYCMD</name>
<accession>Q4PB95</accession>
<accession>A0A0D1DZ00</accession>
<keyword id="KW-0507">mRNA processing</keyword>
<keyword id="KW-0508">mRNA splicing</keyword>
<keyword id="KW-0539">Nucleus</keyword>
<keyword id="KW-1185">Reference proteome</keyword>
<keyword id="KW-0747">Spliceosome</keyword>
<feature type="chain" id="PRO_0000084823" description="Pre-mRNA-processing protein 45">
    <location>
        <begin position="1"/>
        <end position="621"/>
    </location>
</feature>
<feature type="region of interest" description="Disordered" evidence="2">
    <location>
        <begin position="1"/>
        <end position="73"/>
    </location>
</feature>
<feature type="region of interest" description="Disordered" evidence="2">
    <location>
        <begin position="137"/>
        <end position="164"/>
    </location>
</feature>
<feature type="region of interest" description="Disordered" evidence="2">
    <location>
        <begin position="220"/>
        <end position="251"/>
    </location>
</feature>
<feature type="region of interest" description="Disordered" evidence="2">
    <location>
        <begin position="347"/>
        <end position="438"/>
    </location>
</feature>
<feature type="region of interest" description="Disordered" evidence="2">
    <location>
        <begin position="542"/>
        <end position="621"/>
    </location>
</feature>
<feature type="compositionally biased region" description="Low complexity" evidence="2">
    <location>
        <begin position="36"/>
        <end position="51"/>
    </location>
</feature>
<feature type="compositionally biased region" description="Basic and acidic residues" evidence="2">
    <location>
        <begin position="140"/>
        <end position="164"/>
    </location>
</feature>
<feature type="compositionally biased region" description="Basic and acidic residues" evidence="2">
    <location>
        <begin position="220"/>
        <end position="229"/>
    </location>
</feature>
<feature type="compositionally biased region" description="Pro residues" evidence="2">
    <location>
        <begin position="239"/>
        <end position="248"/>
    </location>
</feature>
<feature type="compositionally biased region" description="Basic and acidic residues" evidence="2">
    <location>
        <begin position="364"/>
        <end position="380"/>
    </location>
</feature>
<feature type="compositionally biased region" description="Acidic residues" evidence="2">
    <location>
        <begin position="403"/>
        <end position="417"/>
    </location>
</feature>
<feature type="compositionally biased region" description="Basic and acidic residues" evidence="2">
    <location>
        <begin position="418"/>
        <end position="437"/>
    </location>
</feature>
<feature type="compositionally biased region" description="Basic and acidic residues" evidence="2">
    <location>
        <begin position="594"/>
        <end position="621"/>
    </location>
</feature>
<dbReference type="EMBL" id="CM003145">
    <property type="protein sequence ID" value="KIS69274.1"/>
    <property type="molecule type" value="Genomic_DNA"/>
</dbReference>
<dbReference type="RefSeq" id="XP_011389016.1">
    <property type="nucleotide sequence ID" value="XM_011390714.1"/>
</dbReference>
<dbReference type="SMR" id="Q4PB95"/>
<dbReference type="FunCoup" id="Q4PB95">
    <property type="interactions" value="721"/>
</dbReference>
<dbReference type="STRING" id="237631.Q4PB95"/>
<dbReference type="EnsemblFungi" id="KIS69274">
    <property type="protein sequence ID" value="KIS69274"/>
    <property type="gene ID" value="UMAG_02618"/>
</dbReference>
<dbReference type="GeneID" id="23563326"/>
<dbReference type="KEGG" id="uma:UMAG_02618"/>
<dbReference type="VEuPathDB" id="FungiDB:UMAG_02618"/>
<dbReference type="eggNOG" id="KOG2441">
    <property type="taxonomic scope" value="Eukaryota"/>
</dbReference>
<dbReference type="HOGENOM" id="CLU_006601_2_0_1"/>
<dbReference type="InParanoid" id="Q4PB95"/>
<dbReference type="OrthoDB" id="666364at2759"/>
<dbReference type="Proteomes" id="UP000000561">
    <property type="component" value="Chromosome 6"/>
</dbReference>
<dbReference type="GO" id="GO:0005681">
    <property type="term" value="C:spliceosomal complex"/>
    <property type="evidence" value="ECO:0007669"/>
    <property type="project" value="UniProtKB-KW"/>
</dbReference>
<dbReference type="GO" id="GO:0000398">
    <property type="term" value="P:mRNA splicing, via spliceosome"/>
    <property type="evidence" value="ECO:0007669"/>
    <property type="project" value="InterPro"/>
</dbReference>
<dbReference type="InterPro" id="IPR017862">
    <property type="entry name" value="SKI-int_prot_SKIP"/>
</dbReference>
<dbReference type="InterPro" id="IPR004015">
    <property type="entry name" value="SKI-int_prot_SKIP_SNW-dom"/>
</dbReference>
<dbReference type="PANTHER" id="PTHR12096">
    <property type="entry name" value="NUCLEAR PROTEIN SKIP-RELATED"/>
    <property type="match status" value="1"/>
</dbReference>
<dbReference type="Pfam" id="PF02731">
    <property type="entry name" value="SKIP_SNW"/>
    <property type="match status" value="1"/>
</dbReference>
<evidence type="ECO:0000250" key="1"/>
<evidence type="ECO:0000256" key="2">
    <source>
        <dbReference type="SAM" id="MobiDB-lite"/>
    </source>
</evidence>
<evidence type="ECO:0000305" key="3"/>
<comment type="function">
    <text evidence="1">Involved in pre-mRNA splicing.</text>
</comment>
<comment type="subunit">
    <text evidence="1">Associated with the spliceosome.</text>
</comment>
<comment type="subcellular location">
    <subcellularLocation>
        <location evidence="1">Nucleus</location>
    </subcellularLocation>
</comment>
<comment type="similarity">
    <text evidence="3">Belongs to the SNW family.</text>
</comment>
<organism>
    <name type="scientific">Mycosarcoma maydis</name>
    <name type="common">Corn smut fungus</name>
    <name type="synonym">Ustilago maydis</name>
    <dbReference type="NCBI Taxonomy" id="5270"/>
    <lineage>
        <taxon>Eukaryota</taxon>
        <taxon>Fungi</taxon>
        <taxon>Dikarya</taxon>
        <taxon>Basidiomycota</taxon>
        <taxon>Ustilaginomycotina</taxon>
        <taxon>Ustilaginomycetes</taxon>
        <taxon>Ustilaginales</taxon>
        <taxon>Ustilaginaceae</taxon>
        <taxon>Mycosarcoma</taxon>
    </lineage>
</organism>